<comment type="function">
    <text evidence="1">Responsible for the release of ribosomes from messenger RNA at the termination of protein biosynthesis. May increase the efficiency of translation by recycling ribosomes from one round of translation to another.</text>
</comment>
<comment type="subcellular location">
    <subcellularLocation>
        <location evidence="1">Cytoplasm</location>
    </subcellularLocation>
</comment>
<comment type="similarity">
    <text evidence="1">Belongs to the RRF family.</text>
</comment>
<feature type="chain" id="PRO_0000167526" description="Ribosome-recycling factor">
    <location>
        <begin position="1"/>
        <end position="186"/>
    </location>
</feature>
<proteinExistence type="inferred from homology"/>
<name>RRF_RHOPA</name>
<accession>P61309</accession>
<reference key="1">
    <citation type="journal article" date="2004" name="Nat. Biotechnol.">
        <title>Complete genome sequence of the metabolically versatile photosynthetic bacterium Rhodopseudomonas palustris.</title>
        <authorList>
            <person name="Larimer F.W."/>
            <person name="Chain P."/>
            <person name="Hauser L."/>
            <person name="Lamerdin J.E."/>
            <person name="Malfatti S."/>
            <person name="Do L."/>
            <person name="Land M.L."/>
            <person name="Pelletier D.A."/>
            <person name="Beatty J.T."/>
            <person name="Lang A.S."/>
            <person name="Tabita F.R."/>
            <person name="Gibson J.L."/>
            <person name="Hanson T.E."/>
            <person name="Bobst C."/>
            <person name="Torres y Torres J.L."/>
            <person name="Peres C."/>
            <person name="Harrison F.H."/>
            <person name="Gibson J."/>
            <person name="Harwood C.S."/>
        </authorList>
    </citation>
    <scope>NUCLEOTIDE SEQUENCE [LARGE SCALE GENOMIC DNA]</scope>
    <source>
        <strain>ATCC BAA-98 / CGA009</strain>
    </source>
</reference>
<gene>
    <name evidence="1" type="primary">frr</name>
    <name type="synonym">rrf</name>
    <name type="ordered locus">RPA2919</name>
</gene>
<sequence length="186" mass="20764">MSDKFDVNELKRRMQGAAQSLKHELGGLRTGRASASMLEPVQVDAYGSHMPLNQVATVSVPEPRLISVQVWDKSMVKAVEKGIVDSNLGLSPATEGQVIRLRIPELNEERRKELVKVAHKYAEAARVAVRHVRRDGLDTIKKLEKAHEISEDDQKRLDQEVQKATDAAIAEIDQLLANKEKEILTV</sequence>
<evidence type="ECO:0000255" key="1">
    <source>
        <dbReference type="HAMAP-Rule" id="MF_00040"/>
    </source>
</evidence>
<keyword id="KW-0963">Cytoplasm</keyword>
<keyword id="KW-0648">Protein biosynthesis</keyword>
<protein>
    <recommendedName>
        <fullName evidence="1">Ribosome-recycling factor</fullName>
        <shortName evidence="1">RRF</shortName>
    </recommendedName>
    <alternativeName>
        <fullName evidence="1">Ribosome-releasing factor</fullName>
    </alternativeName>
</protein>
<dbReference type="EMBL" id="BX572602">
    <property type="protein sequence ID" value="CAE28360.1"/>
    <property type="molecule type" value="Genomic_DNA"/>
</dbReference>
<dbReference type="RefSeq" id="WP_011158468.1">
    <property type="nucleotide sequence ID" value="NZ_CP116810.1"/>
</dbReference>
<dbReference type="SMR" id="P61309"/>
<dbReference type="STRING" id="258594.RPA2919"/>
<dbReference type="GeneID" id="66894001"/>
<dbReference type="eggNOG" id="COG0233">
    <property type="taxonomic scope" value="Bacteria"/>
</dbReference>
<dbReference type="HOGENOM" id="CLU_073981_2_0_5"/>
<dbReference type="PhylomeDB" id="P61309"/>
<dbReference type="GO" id="GO:0005829">
    <property type="term" value="C:cytosol"/>
    <property type="evidence" value="ECO:0007669"/>
    <property type="project" value="GOC"/>
</dbReference>
<dbReference type="GO" id="GO:0043023">
    <property type="term" value="F:ribosomal large subunit binding"/>
    <property type="evidence" value="ECO:0007669"/>
    <property type="project" value="TreeGrafter"/>
</dbReference>
<dbReference type="GO" id="GO:0002184">
    <property type="term" value="P:cytoplasmic translational termination"/>
    <property type="evidence" value="ECO:0007669"/>
    <property type="project" value="TreeGrafter"/>
</dbReference>
<dbReference type="CDD" id="cd00520">
    <property type="entry name" value="RRF"/>
    <property type="match status" value="1"/>
</dbReference>
<dbReference type="FunFam" id="1.10.132.20:FF:000001">
    <property type="entry name" value="Ribosome-recycling factor"/>
    <property type="match status" value="1"/>
</dbReference>
<dbReference type="FunFam" id="3.30.1360.40:FF:000001">
    <property type="entry name" value="Ribosome-recycling factor"/>
    <property type="match status" value="1"/>
</dbReference>
<dbReference type="Gene3D" id="3.30.1360.40">
    <property type="match status" value="1"/>
</dbReference>
<dbReference type="Gene3D" id="1.10.132.20">
    <property type="entry name" value="Ribosome-recycling factor"/>
    <property type="match status" value="1"/>
</dbReference>
<dbReference type="HAMAP" id="MF_00040">
    <property type="entry name" value="RRF"/>
    <property type="match status" value="1"/>
</dbReference>
<dbReference type="InterPro" id="IPR002661">
    <property type="entry name" value="Ribosome_recyc_fac"/>
</dbReference>
<dbReference type="InterPro" id="IPR023584">
    <property type="entry name" value="Ribosome_recyc_fac_dom"/>
</dbReference>
<dbReference type="InterPro" id="IPR036191">
    <property type="entry name" value="RRF_sf"/>
</dbReference>
<dbReference type="NCBIfam" id="TIGR00496">
    <property type="entry name" value="frr"/>
    <property type="match status" value="1"/>
</dbReference>
<dbReference type="PANTHER" id="PTHR20982:SF3">
    <property type="entry name" value="MITOCHONDRIAL RIBOSOME RECYCLING FACTOR PSEUDO 1"/>
    <property type="match status" value="1"/>
</dbReference>
<dbReference type="PANTHER" id="PTHR20982">
    <property type="entry name" value="RIBOSOME RECYCLING FACTOR"/>
    <property type="match status" value="1"/>
</dbReference>
<dbReference type="Pfam" id="PF01765">
    <property type="entry name" value="RRF"/>
    <property type="match status" value="1"/>
</dbReference>
<dbReference type="SUPFAM" id="SSF55194">
    <property type="entry name" value="Ribosome recycling factor, RRF"/>
    <property type="match status" value="1"/>
</dbReference>
<organism>
    <name type="scientific">Rhodopseudomonas palustris (strain ATCC BAA-98 / CGA009)</name>
    <dbReference type="NCBI Taxonomy" id="258594"/>
    <lineage>
        <taxon>Bacteria</taxon>
        <taxon>Pseudomonadati</taxon>
        <taxon>Pseudomonadota</taxon>
        <taxon>Alphaproteobacteria</taxon>
        <taxon>Hyphomicrobiales</taxon>
        <taxon>Nitrobacteraceae</taxon>
        <taxon>Rhodopseudomonas</taxon>
    </lineage>
</organism>